<organism>
    <name type="scientific">Aeromonas hydrophila subsp. hydrophila (strain ATCC 7966 / DSM 30187 / BCRC 13018 / CCUG 14551 / JCM 1027 / KCTC 2358 / NCIMB 9240 / NCTC 8049)</name>
    <dbReference type="NCBI Taxonomy" id="380703"/>
    <lineage>
        <taxon>Bacteria</taxon>
        <taxon>Pseudomonadati</taxon>
        <taxon>Pseudomonadota</taxon>
        <taxon>Gammaproteobacteria</taxon>
        <taxon>Aeromonadales</taxon>
        <taxon>Aeromonadaceae</taxon>
        <taxon>Aeromonas</taxon>
    </lineage>
</organism>
<feature type="chain" id="PRO_0000293143" description="D-erythrose-4-phosphate dehydrogenase">
    <location>
        <begin position="1"/>
        <end position="336"/>
    </location>
</feature>
<feature type="active site" description="Nucleophile" evidence="1">
    <location>
        <position position="154"/>
    </location>
</feature>
<feature type="binding site" evidence="1">
    <location>
        <begin position="11"/>
        <end position="12"/>
    </location>
    <ligand>
        <name>NAD(+)</name>
        <dbReference type="ChEBI" id="CHEBI:57540"/>
    </ligand>
</feature>
<feature type="binding site" evidence="1">
    <location>
        <position position="80"/>
    </location>
    <ligand>
        <name>NAD(+)</name>
        <dbReference type="ChEBI" id="CHEBI:57540"/>
    </ligand>
</feature>
<feature type="binding site" evidence="1">
    <location>
        <begin position="153"/>
        <end position="155"/>
    </location>
    <ligand>
        <name>substrate</name>
    </ligand>
</feature>
<feature type="binding site" evidence="1">
    <location>
        <position position="199"/>
    </location>
    <ligand>
        <name>substrate</name>
    </ligand>
</feature>
<feature type="binding site" evidence="1">
    <location>
        <begin position="212"/>
        <end position="213"/>
    </location>
    <ligand>
        <name>substrate</name>
    </ligand>
</feature>
<feature type="binding site" evidence="1">
    <location>
        <position position="235"/>
    </location>
    <ligand>
        <name>substrate</name>
    </ligand>
</feature>
<feature type="binding site" evidence="1">
    <location>
        <position position="317"/>
    </location>
    <ligand>
        <name>NAD(+)</name>
        <dbReference type="ChEBI" id="CHEBI:57540"/>
    </ligand>
</feature>
<feature type="site" description="Activates thiol group during catalysis" evidence="1">
    <location>
        <position position="181"/>
    </location>
</feature>
<comment type="function">
    <text evidence="1">Catalyzes the NAD-dependent conversion of D-erythrose 4-phosphate to 4-phosphoerythronate.</text>
</comment>
<comment type="catalytic activity">
    <reaction evidence="1">
        <text>D-erythrose 4-phosphate + NAD(+) + H2O = 4-phospho-D-erythronate + NADH + 2 H(+)</text>
        <dbReference type="Rhea" id="RHEA:12056"/>
        <dbReference type="ChEBI" id="CHEBI:15377"/>
        <dbReference type="ChEBI" id="CHEBI:15378"/>
        <dbReference type="ChEBI" id="CHEBI:16897"/>
        <dbReference type="ChEBI" id="CHEBI:57540"/>
        <dbReference type="ChEBI" id="CHEBI:57945"/>
        <dbReference type="ChEBI" id="CHEBI:58766"/>
        <dbReference type="EC" id="1.2.1.72"/>
    </reaction>
</comment>
<comment type="pathway">
    <text evidence="1">Cofactor biosynthesis; pyridoxine 5'-phosphate biosynthesis; pyridoxine 5'-phosphate from D-erythrose 4-phosphate: step 1/5.</text>
</comment>
<comment type="subunit">
    <text evidence="1">Homotetramer.</text>
</comment>
<comment type="subcellular location">
    <subcellularLocation>
        <location evidence="1">Cytoplasm</location>
    </subcellularLocation>
</comment>
<comment type="similarity">
    <text evidence="1">Belongs to the glyceraldehyde-3-phosphate dehydrogenase family. Epd subfamily.</text>
</comment>
<accession>A0KGD2</accession>
<reference key="1">
    <citation type="journal article" date="2006" name="J. Bacteriol.">
        <title>Genome sequence of Aeromonas hydrophila ATCC 7966T: jack of all trades.</title>
        <authorList>
            <person name="Seshadri R."/>
            <person name="Joseph S.W."/>
            <person name="Chopra A.K."/>
            <person name="Sha J."/>
            <person name="Shaw J."/>
            <person name="Graf J."/>
            <person name="Haft D.H."/>
            <person name="Wu M."/>
            <person name="Ren Q."/>
            <person name="Rosovitz M.J."/>
            <person name="Madupu R."/>
            <person name="Tallon L."/>
            <person name="Kim M."/>
            <person name="Jin S."/>
            <person name="Vuong H."/>
            <person name="Stine O.C."/>
            <person name="Ali A."/>
            <person name="Horneman A.J."/>
            <person name="Heidelberg J.F."/>
        </authorList>
    </citation>
    <scope>NUCLEOTIDE SEQUENCE [LARGE SCALE GENOMIC DNA]</scope>
    <source>
        <strain>ATCC 7966 / DSM 30187 / BCRC 13018 / CCUG 14551 / JCM 1027 / KCTC 2358 / NCIMB 9240 / NCTC 8049</strain>
    </source>
</reference>
<keyword id="KW-0963">Cytoplasm</keyword>
<keyword id="KW-0520">NAD</keyword>
<keyword id="KW-0560">Oxidoreductase</keyword>
<keyword id="KW-0664">Pyridoxine biosynthesis</keyword>
<keyword id="KW-1185">Reference proteome</keyword>
<name>E4PD_AERHH</name>
<gene>
    <name evidence="1" type="primary">epd</name>
    <name type="ordered locus">AHA_0780</name>
</gene>
<dbReference type="EC" id="1.2.1.72" evidence="1"/>
<dbReference type="EMBL" id="CP000462">
    <property type="protein sequence ID" value="ABK36491.1"/>
    <property type="molecule type" value="Genomic_DNA"/>
</dbReference>
<dbReference type="RefSeq" id="WP_010635047.1">
    <property type="nucleotide sequence ID" value="NC_008570.1"/>
</dbReference>
<dbReference type="RefSeq" id="YP_855322.1">
    <property type="nucleotide sequence ID" value="NC_008570.1"/>
</dbReference>
<dbReference type="SMR" id="A0KGD2"/>
<dbReference type="STRING" id="380703.AHA_0780"/>
<dbReference type="EnsemblBacteria" id="ABK36491">
    <property type="protein sequence ID" value="ABK36491"/>
    <property type="gene ID" value="AHA_0780"/>
</dbReference>
<dbReference type="GeneID" id="4487940"/>
<dbReference type="KEGG" id="aha:AHA_0780"/>
<dbReference type="PATRIC" id="fig|380703.7.peg.778"/>
<dbReference type="eggNOG" id="COG0057">
    <property type="taxonomic scope" value="Bacteria"/>
</dbReference>
<dbReference type="HOGENOM" id="CLU_030140_0_0_6"/>
<dbReference type="OrthoDB" id="9803304at2"/>
<dbReference type="UniPathway" id="UPA00244">
    <property type="reaction ID" value="UER00309"/>
</dbReference>
<dbReference type="Proteomes" id="UP000000756">
    <property type="component" value="Chromosome"/>
</dbReference>
<dbReference type="GO" id="GO:0005737">
    <property type="term" value="C:cytoplasm"/>
    <property type="evidence" value="ECO:0007669"/>
    <property type="project" value="UniProtKB-SubCell"/>
</dbReference>
<dbReference type="GO" id="GO:0048001">
    <property type="term" value="F:erythrose-4-phosphate dehydrogenase activity"/>
    <property type="evidence" value="ECO:0007669"/>
    <property type="project" value="UniProtKB-UniRule"/>
</dbReference>
<dbReference type="GO" id="GO:0051287">
    <property type="term" value="F:NAD binding"/>
    <property type="evidence" value="ECO:0007669"/>
    <property type="project" value="InterPro"/>
</dbReference>
<dbReference type="GO" id="GO:0042823">
    <property type="term" value="P:pyridoxal phosphate biosynthetic process"/>
    <property type="evidence" value="ECO:0007669"/>
    <property type="project" value="UniProtKB-UniRule"/>
</dbReference>
<dbReference type="GO" id="GO:0008615">
    <property type="term" value="P:pyridoxine biosynthetic process"/>
    <property type="evidence" value="ECO:0007669"/>
    <property type="project" value="UniProtKB-UniRule"/>
</dbReference>
<dbReference type="CDD" id="cd23937">
    <property type="entry name" value="GAPDH_C_E4PDH"/>
    <property type="match status" value="1"/>
</dbReference>
<dbReference type="CDD" id="cd17892">
    <property type="entry name" value="GAPDH_N_E4PDH"/>
    <property type="match status" value="1"/>
</dbReference>
<dbReference type="FunFam" id="3.30.360.10:FF:000007">
    <property type="entry name" value="D-erythrose-4-phosphate dehydrogenase"/>
    <property type="match status" value="1"/>
</dbReference>
<dbReference type="FunFam" id="3.40.50.720:FF:000001">
    <property type="entry name" value="Glyceraldehyde-3-phosphate dehydrogenase"/>
    <property type="match status" value="1"/>
</dbReference>
<dbReference type="Gene3D" id="3.30.360.10">
    <property type="entry name" value="Dihydrodipicolinate Reductase, domain 2"/>
    <property type="match status" value="1"/>
</dbReference>
<dbReference type="Gene3D" id="3.40.50.720">
    <property type="entry name" value="NAD(P)-binding Rossmann-like Domain"/>
    <property type="match status" value="1"/>
</dbReference>
<dbReference type="HAMAP" id="MF_01640">
    <property type="entry name" value="E4P_dehydrog"/>
    <property type="match status" value="1"/>
</dbReference>
<dbReference type="InterPro" id="IPR006422">
    <property type="entry name" value="E4P_DH_bac"/>
</dbReference>
<dbReference type="InterPro" id="IPR020831">
    <property type="entry name" value="GlycerAld/Erythrose_P_DH"/>
</dbReference>
<dbReference type="InterPro" id="IPR020829">
    <property type="entry name" value="GlycerAld_3-P_DH_cat"/>
</dbReference>
<dbReference type="InterPro" id="IPR020828">
    <property type="entry name" value="GlycerAld_3-P_DH_NAD(P)-bd"/>
</dbReference>
<dbReference type="InterPro" id="IPR036291">
    <property type="entry name" value="NAD(P)-bd_dom_sf"/>
</dbReference>
<dbReference type="NCBIfam" id="TIGR01532">
    <property type="entry name" value="E4PD_g-proteo"/>
    <property type="match status" value="1"/>
</dbReference>
<dbReference type="NCBIfam" id="NF010058">
    <property type="entry name" value="PRK13535.1"/>
    <property type="match status" value="1"/>
</dbReference>
<dbReference type="PANTHER" id="PTHR43148">
    <property type="entry name" value="GLYCERALDEHYDE-3-PHOSPHATE DEHYDROGENASE 2"/>
    <property type="match status" value="1"/>
</dbReference>
<dbReference type="Pfam" id="PF02800">
    <property type="entry name" value="Gp_dh_C"/>
    <property type="match status" value="1"/>
</dbReference>
<dbReference type="Pfam" id="PF00044">
    <property type="entry name" value="Gp_dh_N"/>
    <property type="match status" value="1"/>
</dbReference>
<dbReference type="PIRSF" id="PIRSF000149">
    <property type="entry name" value="GAP_DH"/>
    <property type="match status" value="1"/>
</dbReference>
<dbReference type="PRINTS" id="PR00078">
    <property type="entry name" value="G3PDHDRGNASE"/>
</dbReference>
<dbReference type="SMART" id="SM00846">
    <property type="entry name" value="Gp_dh_N"/>
    <property type="match status" value="1"/>
</dbReference>
<dbReference type="SUPFAM" id="SSF55347">
    <property type="entry name" value="Glyceraldehyde-3-phosphate dehydrogenase-like, C-terminal domain"/>
    <property type="match status" value="1"/>
</dbReference>
<dbReference type="SUPFAM" id="SSF51735">
    <property type="entry name" value="NAD(P)-binding Rossmann-fold domains"/>
    <property type="match status" value="1"/>
</dbReference>
<evidence type="ECO:0000255" key="1">
    <source>
        <dbReference type="HAMAP-Rule" id="MF_01640"/>
    </source>
</evidence>
<sequence>MIKIAINGYGRIGRNVLRALYESGRDKNIKIVAINELAAPEAMVHLTRFDTSHGRFHHPVQLAGNSMLVGEDLISLFAERDPSRLPWRALGVDVVLDCTGVFGSRADAELHLAAGAGKVLFSHPAEADVDATIVYGVNHQVLTGRERIVSNASCTTNCVVPVIETLHREFEINCGTITTIHSAMHDQQVIDAYHSDLRRTRAASQSIIPVDTKLAKGLERILPHFAGKFEAIAVRVPTINVTAMDLSITVRKKVTVTDVNQALQRASRGTLSGILDYTEEPLVSVDFNHDAHSCIIDGTQTRVSDANLVKMLMWCDNEWGFANRMLDTTRAMMAAG</sequence>
<proteinExistence type="inferred from homology"/>
<protein>
    <recommendedName>
        <fullName evidence="1">D-erythrose-4-phosphate dehydrogenase</fullName>
        <shortName evidence="1">E4PDH</shortName>
        <ecNumber evidence="1">1.2.1.72</ecNumber>
    </recommendedName>
</protein>